<reference key="1">
    <citation type="journal article" date="2002" name="DNA Res.">
        <title>Complete genome structure of the thermophilic cyanobacterium Thermosynechococcus elongatus BP-1.</title>
        <authorList>
            <person name="Nakamura Y."/>
            <person name="Kaneko T."/>
            <person name="Sato S."/>
            <person name="Ikeuchi M."/>
            <person name="Katoh H."/>
            <person name="Sasamoto S."/>
            <person name="Watanabe A."/>
            <person name="Iriguchi M."/>
            <person name="Kawashima K."/>
            <person name="Kimura T."/>
            <person name="Kishida Y."/>
            <person name="Kiyokawa C."/>
            <person name="Kohara M."/>
            <person name="Matsumoto M."/>
            <person name="Matsuno A."/>
            <person name="Nakazaki N."/>
            <person name="Shimpo S."/>
            <person name="Sugimoto M."/>
            <person name="Takeuchi C."/>
            <person name="Yamada M."/>
            <person name="Tabata S."/>
        </authorList>
    </citation>
    <scope>NUCLEOTIDE SEQUENCE [LARGE SCALE GENOMIC DNA]</scope>
    <source>
        <strain>NIES-2133 / IAM M-273 / BP-1</strain>
    </source>
</reference>
<accession>Q8DKM7</accession>
<organism>
    <name type="scientific">Thermosynechococcus vestitus (strain NIES-2133 / IAM M-273 / BP-1)</name>
    <dbReference type="NCBI Taxonomy" id="197221"/>
    <lineage>
        <taxon>Bacteria</taxon>
        <taxon>Bacillati</taxon>
        <taxon>Cyanobacteriota</taxon>
        <taxon>Cyanophyceae</taxon>
        <taxon>Acaryochloridales</taxon>
        <taxon>Thermosynechococcaceae</taxon>
        <taxon>Thermosynechococcus</taxon>
    </lineage>
</organism>
<gene>
    <name evidence="1" type="primary">lipB</name>
    <name type="ordered locus">tll0832</name>
</gene>
<dbReference type="EC" id="2.3.1.181" evidence="1"/>
<dbReference type="EMBL" id="BA000039">
    <property type="protein sequence ID" value="BAC08384.1"/>
    <property type="molecule type" value="Genomic_DNA"/>
</dbReference>
<dbReference type="RefSeq" id="NP_681622.1">
    <property type="nucleotide sequence ID" value="NC_004113.1"/>
</dbReference>
<dbReference type="RefSeq" id="WP_011056676.1">
    <property type="nucleotide sequence ID" value="NC_004113.1"/>
</dbReference>
<dbReference type="SMR" id="Q8DKM7"/>
<dbReference type="STRING" id="197221.gene:10747424"/>
<dbReference type="EnsemblBacteria" id="BAC08384">
    <property type="protein sequence ID" value="BAC08384"/>
    <property type="gene ID" value="BAC08384"/>
</dbReference>
<dbReference type="KEGG" id="tel:tll0832"/>
<dbReference type="PATRIC" id="fig|197221.4.peg.877"/>
<dbReference type="eggNOG" id="COG0321">
    <property type="taxonomic scope" value="Bacteria"/>
</dbReference>
<dbReference type="UniPathway" id="UPA00538">
    <property type="reaction ID" value="UER00592"/>
</dbReference>
<dbReference type="Proteomes" id="UP000000440">
    <property type="component" value="Chromosome"/>
</dbReference>
<dbReference type="GO" id="GO:0005737">
    <property type="term" value="C:cytoplasm"/>
    <property type="evidence" value="ECO:0007669"/>
    <property type="project" value="UniProtKB-SubCell"/>
</dbReference>
<dbReference type="GO" id="GO:0033819">
    <property type="term" value="F:lipoyl(octanoyl) transferase activity"/>
    <property type="evidence" value="ECO:0007669"/>
    <property type="project" value="UniProtKB-EC"/>
</dbReference>
<dbReference type="GO" id="GO:0036211">
    <property type="term" value="P:protein modification process"/>
    <property type="evidence" value="ECO:0007669"/>
    <property type="project" value="InterPro"/>
</dbReference>
<dbReference type="CDD" id="cd16444">
    <property type="entry name" value="LipB"/>
    <property type="match status" value="1"/>
</dbReference>
<dbReference type="Gene3D" id="3.30.930.10">
    <property type="entry name" value="Bira Bifunctional Protein, Domain 2"/>
    <property type="match status" value="1"/>
</dbReference>
<dbReference type="HAMAP" id="MF_00013">
    <property type="entry name" value="LipB"/>
    <property type="match status" value="1"/>
</dbReference>
<dbReference type="InterPro" id="IPR045864">
    <property type="entry name" value="aa-tRNA-synth_II/BPL/LPL"/>
</dbReference>
<dbReference type="InterPro" id="IPR004143">
    <property type="entry name" value="BPL_LPL_catalytic"/>
</dbReference>
<dbReference type="InterPro" id="IPR000544">
    <property type="entry name" value="Octanoyltransferase"/>
</dbReference>
<dbReference type="InterPro" id="IPR020605">
    <property type="entry name" value="Octanoyltransferase_CS"/>
</dbReference>
<dbReference type="NCBIfam" id="TIGR00214">
    <property type="entry name" value="lipB"/>
    <property type="match status" value="1"/>
</dbReference>
<dbReference type="NCBIfam" id="NF010925">
    <property type="entry name" value="PRK14345.1"/>
    <property type="match status" value="1"/>
</dbReference>
<dbReference type="PANTHER" id="PTHR10993:SF7">
    <property type="entry name" value="LIPOYLTRANSFERASE 2, MITOCHONDRIAL-RELATED"/>
    <property type="match status" value="1"/>
</dbReference>
<dbReference type="PANTHER" id="PTHR10993">
    <property type="entry name" value="OCTANOYLTRANSFERASE"/>
    <property type="match status" value="1"/>
</dbReference>
<dbReference type="Pfam" id="PF21948">
    <property type="entry name" value="LplA-B_cat"/>
    <property type="match status" value="1"/>
</dbReference>
<dbReference type="PIRSF" id="PIRSF016262">
    <property type="entry name" value="LPLase"/>
    <property type="match status" value="1"/>
</dbReference>
<dbReference type="SUPFAM" id="SSF55681">
    <property type="entry name" value="Class II aaRS and biotin synthetases"/>
    <property type="match status" value="1"/>
</dbReference>
<dbReference type="PROSITE" id="PS51733">
    <property type="entry name" value="BPL_LPL_CATALYTIC"/>
    <property type="match status" value="1"/>
</dbReference>
<dbReference type="PROSITE" id="PS01313">
    <property type="entry name" value="LIPB"/>
    <property type="match status" value="1"/>
</dbReference>
<protein>
    <recommendedName>
        <fullName evidence="1">Octanoyltransferase</fullName>
        <ecNumber evidence="1">2.3.1.181</ecNumber>
    </recommendedName>
    <alternativeName>
        <fullName evidence="1">Lipoate-protein ligase B</fullName>
    </alternativeName>
    <alternativeName>
        <fullName evidence="1">Lipoyl/octanoyl transferase</fullName>
    </alternativeName>
    <alternativeName>
        <fullName evidence="1">Octanoyl-[acyl-carrier-protein]-protein N-octanoyltransferase</fullName>
    </alternativeName>
</protein>
<evidence type="ECO:0000255" key="1">
    <source>
        <dbReference type="HAMAP-Rule" id="MF_00013"/>
    </source>
</evidence>
<evidence type="ECO:0000255" key="2">
    <source>
        <dbReference type="PROSITE-ProRule" id="PRU01067"/>
    </source>
</evidence>
<name>LIPB_THEVB</name>
<sequence length="226" mass="25279">MKNALGWHCALGIIPYRDAWRWQQQLVAERRQNLAAPDVLLTLEHPAIYTLGQGATTAHIHFDPVATGIEVLRIERGGDVTYHCPGQLVAYPILNLRRHCCDLHWYLHQLEEVIIQTLRHYGIKGERVAGLTGVWVEGYKVAAIGIKVTRWISFHGIALNVVNDLKGFGRIVPCGIGDRPVGNLRQFCADIQLEDVRQQFVAAFSRVFGLEFAPKALADLLIPTSS</sequence>
<keyword id="KW-0012">Acyltransferase</keyword>
<keyword id="KW-0963">Cytoplasm</keyword>
<keyword id="KW-1185">Reference proteome</keyword>
<keyword id="KW-0808">Transferase</keyword>
<proteinExistence type="inferred from homology"/>
<feature type="chain" id="PRO_0000062882" description="Octanoyltransferase">
    <location>
        <begin position="1"/>
        <end position="226"/>
    </location>
</feature>
<feature type="domain" description="BPL/LPL catalytic" evidence="2">
    <location>
        <begin position="34"/>
        <end position="212"/>
    </location>
</feature>
<feature type="active site" description="Acyl-thioester intermediate" evidence="1">
    <location>
        <position position="174"/>
    </location>
</feature>
<feature type="binding site" evidence="1">
    <location>
        <begin position="76"/>
        <end position="83"/>
    </location>
    <ligand>
        <name>substrate</name>
    </ligand>
</feature>
<feature type="binding site" evidence="1">
    <location>
        <begin position="143"/>
        <end position="145"/>
    </location>
    <ligand>
        <name>substrate</name>
    </ligand>
</feature>
<feature type="binding site" evidence="1">
    <location>
        <begin position="156"/>
        <end position="158"/>
    </location>
    <ligand>
        <name>substrate</name>
    </ligand>
</feature>
<feature type="site" description="Lowers pKa of active site Cys" evidence="1">
    <location>
        <position position="140"/>
    </location>
</feature>
<comment type="function">
    <text evidence="1">Catalyzes the transfer of endogenously produced octanoic acid from octanoyl-acyl-carrier-protein onto the lipoyl domains of lipoate-dependent enzymes. Lipoyl-ACP can also act as a substrate although octanoyl-ACP is likely to be the physiological substrate.</text>
</comment>
<comment type="catalytic activity">
    <reaction evidence="1">
        <text>octanoyl-[ACP] + L-lysyl-[protein] = N(6)-octanoyl-L-lysyl-[protein] + holo-[ACP] + H(+)</text>
        <dbReference type="Rhea" id="RHEA:17665"/>
        <dbReference type="Rhea" id="RHEA-COMP:9636"/>
        <dbReference type="Rhea" id="RHEA-COMP:9685"/>
        <dbReference type="Rhea" id="RHEA-COMP:9752"/>
        <dbReference type="Rhea" id="RHEA-COMP:9928"/>
        <dbReference type="ChEBI" id="CHEBI:15378"/>
        <dbReference type="ChEBI" id="CHEBI:29969"/>
        <dbReference type="ChEBI" id="CHEBI:64479"/>
        <dbReference type="ChEBI" id="CHEBI:78463"/>
        <dbReference type="ChEBI" id="CHEBI:78809"/>
        <dbReference type="EC" id="2.3.1.181"/>
    </reaction>
</comment>
<comment type="pathway">
    <text evidence="1">Protein modification; protein lipoylation via endogenous pathway; protein N(6)-(lipoyl)lysine from octanoyl-[acyl-carrier-protein]: step 1/2.</text>
</comment>
<comment type="subcellular location">
    <subcellularLocation>
        <location evidence="1">Cytoplasm</location>
    </subcellularLocation>
</comment>
<comment type="miscellaneous">
    <text evidence="1">In the reaction, the free carboxyl group of octanoic acid is attached via an amide linkage to the epsilon-amino group of a specific lysine residue of lipoyl domains of lipoate-dependent enzymes.</text>
</comment>
<comment type="similarity">
    <text evidence="1">Belongs to the LipB family.</text>
</comment>